<dbReference type="EC" id="2.7.1.167" evidence="1"/>
<dbReference type="EC" id="2.7.7.70" evidence="1"/>
<dbReference type="EMBL" id="CP001157">
    <property type="protein sequence ID" value="ACO80585.1"/>
    <property type="molecule type" value="Genomic_DNA"/>
</dbReference>
<dbReference type="RefSeq" id="WP_012702952.1">
    <property type="nucleotide sequence ID" value="NC_012560.1"/>
</dbReference>
<dbReference type="SMR" id="C1DGT9"/>
<dbReference type="STRING" id="322710.Avin_44680"/>
<dbReference type="EnsemblBacteria" id="ACO80585">
    <property type="protein sequence ID" value="ACO80585"/>
    <property type="gene ID" value="Avin_44680"/>
</dbReference>
<dbReference type="GeneID" id="88187361"/>
<dbReference type="KEGG" id="avn:Avin_44680"/>
<dbReference type="eggNOG" id="COG0615">
    <property type="taxonomic scope" value="Bacteria"/>
</dbReference>
<dbReference type="eggNOG" id="COG2870">
    <property type="taxonomic scope" value="Bacteria"/>
</dbReference>
<dbReference type="HOGENOM" id="CLU_021150_2_1_6"/>
<dbReference type="OrthoDB" id="9802794at2"/>
<dbReference type="UniPathway" id="UPA00356">
    <property type="reaction ID" value="UER00437"/>
</dbReference>
<dbReference type="UniPathway" id="UPA00356">
    <property type="reaction ID" value="UER00439"/>
</dbReference>
<dbReference type="Proteomes" id="UP000002424">
    <property type="component" value="Chromosome"/>
</dbReference>
<dbReference type="GO" id="GO:0005829">
    <property type="term" value="C:cytosol"/>
    <property type="evidence" value="ECO:0007669"/>
    <property type="project" value="TreeGrafter"/>
</dbReference>
<dbReference type="GO" id="GO:0005524">
    <property type="term" value="F:ATP binding"/>
    <property type="evidence" value="ECO:0007669"/>
    <property type="project" value="UniProtKB-UniRule"/>
</dbReference>
<dbReference type="GO" id="GO:0033785">
    <property type="term" value="F:heptose 7-phosphate kinase activity"/>
    <property type="evidence" value="ECO:0007669"/>
    <property type="project" value="UniProtKB-UniRule"/>
</dbReference>
<dbReference type="GO" id="GO:0033786">
    <property type="term" value="F:heptose-1-phosphate adenylyltransferase activity"/>
    <property type="evidence" value="ECO:0007669"/>
    <property type="project" value="UniProtKB-UniRule"/>
</dbReference>
<dbReference type="GO" id="GO:0016773">
    <property type="term" value="F:phosphotransferase activity, alcohol group as acceptor"/>
    <property type="evidence" value="ECO:0007669"/>
    <property type="project" value="InterPro"/>
</dbReference>
<dbReference type="GO" id="GO:0097171">
    <property type="term" value="P:ADP-L-glycero-beta-D-manno-heptose biosynthetic process"/>
    <property type="evidence" value="ECO:0007669"/>
    <property type="project" value="UniProtKB-UniPathway"/>
</dbReference>
<dbReference type="CDD" id="cd01172">
    <property type="entry name" value="RfaE_like"/>
    <property type="match status" value="1"/>
</dbReference>
<dbReference type="FunFam" id="3.40.1190.20:FF:000002">
    <property type="entry name" value="Bifunctional protein HldE"/>
    <property type="match status" value="1"/>
</dbReference>
<dbReference type="FunFam" id="3.40.50.620:FF:000028">
    <property type="entry name" value="Bifunctional protein HldE"/>
    <property type="match status" value="1"/>
</dbReference>
<dbReference type="Gene3D" id="3.40.1190.20">
    <property type="match status" value="1"/>
</dbReference>
<dbReference type="Gene3D" id="3.40.50.620">
    <property type="entry name" value="HUPs"/>
    <property type="match status" value="1"/>
</dbReference>
<dbReference type="HAMAP" id="MF_01603">
    <property type="entry name" value="HldE"/>
    <property type="match status" value="1"/>
</dbReference>
<dbReference type="InterPro" id="IPR023030">
    <property type="entry name" value="Bifunc_HldE"/>
</dbReference>
<dbReference type="InterPro" id="IPR002173">
    <property type="entry name" value="Carboh/pur_kinase_PfkB_CS"/>
</dbReference>
<dbReference type="InterPro" id="IPR004821">
    <property type="entry name" value="Cyt_trans-like"/>
</dbReference>
<dbReference type="InterPro" id="IPR011611">
    <property type="entry name" value="PfkB_dom"/>
</dbReference>
<dbReference type="InterPro" id="IPR011913">
    <property type="entry name" value="RfaE_dom_I"/>
</dbReference>
<dbReference type="InterPro" id="IPR011914">
    <property type="entry name" value="RfaE_dom_II"/>
</dbReference>
<dbReference type="InterPro" id="IPR029056">
    <property type="entry name" value="Ribokinase-like"/>
</dbReference>
<dbReference type="InterPro" id="IPR014729">
    <property type="entry name" value="Rossmann-like_a/b/a_fold"/>
</dbReference>
<dbReference type="NCBIfam" id="TIGR00125">
    <property type="entry name" value="cyt_tran_rel"/>
    <property type="match status" value="1"/>
</dbReference>
<dbReference type="NCBIfam" id="NF008454">
    <property type="entry name" value="PRK11316.1"/>
    <property type="match status" value="1"/>
</dbReference>
<dbReference type="NCBIfam" id="TIGR02198">
    <property type="entry name" value="rfaE_dom_I"/>
    <property type="match status" value="1"/>
</dbReference>
<dbReference type="NCBIfam" id="TIGR02199">
    <property type="entry name" value="rfaE_dom_II"/>
    <property type="match status" value="1"/>
</dbReference>
<dbReference type="PANTHER" id="PTHR46969">
    <property type="entry name" value="BIFUNCTIONAL PROTEIN HLDE"/>
    <property type="match status" value="1"/>
</dbReference>
<dbReference type="PANTHER" id="PTHR46969:SF1">
    <property type="entry name" value="BIFUNCTIONAL PROTEIN HLDE"/>
    <property type="match status" value="1"/>
</dbReference>
<dbReference type="Pfam" id="PF01467">
    <property type="entry name" value="CTP_transf_like"/>
    <property type="match status" value="1"/>
</dbReference>
<dbReference type="Pfam" id="PF00294">
    <property type="entry name" value="PfkB"/>
    <property type="match status" value="1"/>
</dbReference>
<dbReference type="SUPFAM" id="SSF52374">
    <property type="entry name" value="Nucleotidylyl transferase"/>
    <property type="match status" value="1"/>
</dbReference>
<dbReference type="SUPFAM" id="SSF53613">
    <property type="entry name" value="Ribokinase-like"/>
    <property type="match status" value="1"/>
</dbReference>
<dbReference type="PROSITE" id="PS00583">
    <property type="entry name" value="PFKB_KINASES_1"/>
    <property type="match status" value="1"/>
</dbReference>
<reference key="1">
    <citation type="journal article" date="2009" name="J. Bacteriol.">
        <title>Genome sequence of Azotobacter vinelandii, an obligate aerobe specialized to support diverse anaerobic metabolic processes.</title>
        <authorList>
            <person name="Setubal J.C."/>
            <person name="Dos Santos P."/>
            <person name="Goldman B.S."/>
            <person name="Ertesvaag H."/>
            <person name="Espin G."/>
            <person name="Rubio L.M."/>
            <person name="Valla S."/>
            <person name="Almeida N.F."/>
            <person name="Balasubramanian D."/>
            <person name="Cromes L."/>
            <person name="Curatti L."/>
            <person name="Du Z."/>
            <person name="Godsy E."/>
            <person name="Goodner B."/>
            <person name="Hellner-Burris K."/>
            <person name="Hernandez J.A."/>
            <person name="Houmiel K."/>
            <person name="Imperial J."/>
            <person name="Kennedy C."/>
            <person name="Larson T.J."/>
            <person name="Latreille P."/>
            <person name="Ligon L.S."/>
            <person name="Lu J."/>
            <person name="Maerk M."/>
            <person name="Miller N.M."/>
            <person name="Norton S."/>
            <person name="O'Carroll I.P."/>
            <person name="Paulsen I."/>
            <person name="Raulfs E.C."/>
            <person name="Roemer R."/>
            <person name="Rosser J."/>
            <person name="Segura D."/>
            <person name="Slater S."/>
            <person name="Stricklin S.L."/>
            <person name="Studholme D.J."/>
            <person name="Sun J."/>
            <person name="Viana C.J."/>
            <person name="Wallin E."/>
            <person name="Wang B."/>
            <person name="Wheeler C."/>
            <person name="Zhu H."/>
            <person name="Dean D.R."/>
            <person name="Dixon R."/>
            <person name="Wood D."/>
        </authorList>
    </citation>
    <scope>NUCLEOTIDE SEQUENCE [LARGE SCALE GENOMIC DNA]</scope>
    <source>
        <strain>DJ / ATCC BAA-1303</strain>
    </source>
</reference>
<sequence>MKLSMPRFDRSPVLVVGDVMLDRYWHGCTTRISPEAPVPVVKVEQMEDRPGGAANVALNIAALGGAATLVGVTGADEAADSLARSLASAGVDVHFQRIASQPTIVKLRVMSRHQQLLRMDFEEPFATDAAALAAEVEGLLAGIRVLVLSDYGKGALKNHQALIQAARARGIAVLADPKGKDFGIYRGADLITPNLAEFENVVGRCADEGELVARGARLMADLELGALLVTRGEHGMTLMRPGHPPLHLPARAREVFDVTGAGDTVISTLAAALAAGEELPQAVALANLAAGIVVGKLGTATISVPELRRAVQREQGSERGVLGLEQLLLAIEDAHAQGEKIVFTNGCFDILHAGHVTYLEQARAQGDRLIVAVNDDASVTRLKGPGRPINTVDRRMAVLAGLGAVDWVISFAEDTPERLLEQIRPDVLVKGGDYGIDQVVGADIVRAHGGEVRVLGLVENSSTTGIVEKIRRQP</sequence>
<organism>
    <name type="scientific">Azotobacter vinelandii (strain DJ / ATCC BAA-1303)</name>
    <dbReference type="NCBI Taxonomy" id="322710"/>
    <lineage>
        <taxon>Bacteria</taxon>
        <taxon>Pseudomonadati</taxon>
        <taxon>Pseudomonadota</taxon>
        <taxon>Gammaproteobacteria</taxon>
        <taxon>Pseudomonadales</taxon>
        <taxon>Pseudomonadaceae</taxon>
        <taxon>Azotobacter</taxon>
    </lineage>
</organism>
<feature type="chain" id="PRO_1000215691" description="Bifunctional protein HldE">
    <location>
        <begin position="1"/>
        <end position="474"/>
    </location>
</feature>
<feature type="region of interest" description="Ribokinase">
    <location>
        <begin position="1"/>
        <end position="317"/>
    </location>
</feature>
<feature type="region of interest" description="Cytidylyltransferase">
    <location>
        <begin position="343"/>
        <end position="474"/>
    </location>
</feature>
<feature type="active site" evidence="1">
    <location>
        <position position="263"/>
    </location>
</feature>
<feature type="binding site" evidence="1">
    <location>
        <begin position="194"/>
        <end position="197"/>
    </location>
    <ligand>
        <name>ATP</name>
        <dbReference type="ChEBI" id="CHEBI:30616"/>
    </ligand>
</feature>
<accession>C1DGT9</accession>
<name>HLDE_AZOVD</name>
<comment type="function">
    <text evidence="1">Catalyzes the phosphorylation of D-glycero-D-manno-heptose 7-phosphate at the C-1 position to selectively form D-glycero-beta-D-manno-heptose-1,7-bisphosphate.</text>
</comment>
<comment type="function">
    <text evidence="1">Catalyzes the ADP transfer from ATP to D-glycero-beta-D-manno-heptose 1-phosphate, yielding ADP-D-glycero-beta-D-manno-heptose.</text>
</comment>
<comment type="catalytic activity">
    <reaction evidence="1">
        <text>D-glycero-beta-D-manno-heptose 7-phosphate + ATP = D-glycero-beta-D-manno-heptose 1,7-bisphosphate + ADP + H(+)</text>
        <dbReference type="Rhea" id="RHEA:27473"/>
        <dbReference type="ChEBI" id="CHEBI:15378"/>
        <dbReference type="ChEBI" id="CHEBI:30616"/>
        <dbReference type="ChEBI" id="CHEBI:60204"/>
        <dbReference type="ChEBI" id="CHEBI:60208"/>
        <dbReference type="ChEBI" id="CHEBI:456216"/>
        <dbReference type="EC" id="2.7.1.167"/>
    </reaction>
</comment>
<comment type="catalytic activity">
    <reaction evidence="1">
        <text>D-glycero-beta-D-manno-heptose 1-phosphate + ATP + H(+) = ADP-D-glycero-beta-D-manno-heptose + diphosphate</text>
        <dbReference type="Rhea" id="RHEA:27465"/>
        <dbReference type="ChEBI" id="CHEBI:15378"/>
        <dbReference type="ChEBI" id="CHEBI:30616"/>
        <dbReference type="ChEBI" id="CHEBI:33019"/>
        <dbReference type="ChEBI" id="CHEBI:59967"/>
        <dbReference type="ChEBI" id="CHEBI:61593"/>
        <dbReference type="EC" id="2.7.7.70"/>
    </reaction>
</comment>
<comment type="pathway">
    <text evidence="1">Nucleotide-sugar biosynthesis; ADP-L-glycero-beta-D-manno-heptose biosynthesis; ADP-L-glycero-beta-D-manno-heptose from D-glycero-beta-D-manno-heptose 7-phosphate: step 1/4.</text>
</comment>
<comment type="pathway">
    <text evidence="1">Nucleotide-sugar biosynthesis; ADP-L-glycero-beta-D-manno-heptose biosynthesis; ADP-L-glycero-beta-D-manno-heptose from D-glycero-beta-D-manno-heptose 7-phosphate: step 3/4.</text>
</comment>
<comment type="subunit">
    <text evidence="1">Homodimer.</text>
</comment>
<comment type="similarity">
    <text evidence="1">In the N-terminal section; belongs to the carbohydrate kinase PfkB family.</text>
</comment>
<comment type="similarity">
    <text evidence="1">In the C-terminal section; belongs to the cytidylyltransferase family.</text>
</comment>
<evidence type="ECO:0000255" key="1">
    <source>
        <dbReference type="HAMAP-Rule" id="MF_01603"/>
    </source>
</evidence>
<protein>
    <recommendedName>
        <fullName evidence="1">Bifunctional protein HldE</fullName>
    </recommendedName>
    <domain>
        <recommendedName>
            <fullName evidence="1">D-beta-D-heptose 7-phosphate kinase</fullName>
            <ecNumber evidence="1">2.7.1.167</ecNumber>
        </recommendedName>
        <alternativeName>
            <fullName evidence="1">D-beta-D-heptose 7-phosphotransferase</fullName>
        </alternativeName>
        <alternativeName>
            <fullName evidence="1">D-glycero-beta-D-manno-heptose-7-phosphate kinase</fullName>
        </alternativeName>
    </domain>
    <domain>
        <recommendedName>
            <fullName evidence="1">D-beta-D-heptose 1-phosphate adenylyltransferase</fullName>
            <ecNumber evidence="1">2.7.7.70</ecNumber>
        </recommendedName>
        <alternativeName>
            <fullName evidence="1">D-glycero-beta-D-manno-heptose 1-phosphate adenylyltransferase</fullName>
        </alternativeName>
    </domain>
</protein>
<proteinExistence type="inferred from homology"/>
<gene>
    <name evidence="1" type="primary">hldE</name>
    <name type="ordered locus">Avin_44680</name>
</gene>
<keyword id="KW-0067">ATP-binding</keyword>
<keyword id="KW-0119">Carbohydrate metabolism</keyword>
<keyword id="KW-0418">Kinase</keyword>
<keyword id="KW-0511">Multifunctional enzyme</keyword>
<keyword id="KW-0547">Nucleotide-binding</keyword>
<keyword id="KW-0548">Nucleotidyltransferase</keyword>
<keyword id="KW-0808">Transferase</keyword>